<feature type="chain" id="PRO_1000004722" description="Glutamyl-tRNA reductase">
    <location>
        <begin position="1"/>
        <end position="418"/>
    </location>
</feature>
<feature type="active site" description="Nucleophile" evidence="1">
    <location>
        <position position="50"/>
    </location>
</feature>
<feature type="binding site" evidence="1">
    <location>
        <begin position="49"/>
        <end position="52"/>
    </location>
    <ligand>
        <name>substrate</name>
    </ligand>
</feature>
<feature type="binding site" evidence="1">
    <location>
        <position position="107"/>
    </location>
    <ligand>
        <name>substrate</name>
    </ligand>
</feature>
<feature type="binding site" evidence="1">
    <location>
        <begin position="112"/>
        <end position="114"/>
    </location>
    <ligand>
        <name>substrate</name>
    </ligand>
</feature>
<feature type="binding site" evidence="1">
    <location>
        <position position="118"/>
    </location>
    <ligand>
        <name>substrate</name>
    </ligand>
</feature>
<feature type="binding site" evidence="1">
    <location>
        <begin position="187"/>
        <end position="192"/>
    </location>
    <ligand>
        <name>NADP(+)</name>
        <dbReference type="ChEBI" id="CHEBI:58349"/>
    </ligand>
</feature>
<feature type="site" description="Important for activity" evidence="1">
    <location>
        <position position="97"/>
    </location>
</feature>
<organism>
    <name type="scientific">Vibrio campbellii (strain ATCC BAA-1116)</name>
    <dbReference type="NCBI Taxonomy" id="2902295"/>
    <lineage>
        <taxon>Bacteria</taxon>
        <taxon>Pseudomonadati</taxon>
        <taxon>Pseudomonadota</taxon>
        <taxon>Gammaproteobacteria</taxon>
        <taxon>Vibrionales</taxon>
        <taxon>Vibrionaceae</taxon>
        <taxon>Vibrio</taxon>
    </lineage>
</organism>
<comment type="function">
    <text evidence="1">Catalyzes the NADPH-dependent reduction of glutamyl-tRNA(Glu) to glutamate 1-semialdehyde (GSA).</text>
</comment>
<comment type="catalytic activity">
    <reaction evidence="1">
        <text>(S)-4-amino-5-oxopentanoate + tRNA(Glu) + NADP(+) = L-glutamyl-tRNA(Glu) + NADPH + H(+)</text>
        <dbReference type="Rhea" id="RHEA:12344"/>
        <dbReference type="Rhea" id="RHEA-COMP:9663"/>
        <dbReference type="Rhea" id="RHEA-COMP:9680"/>
        <dbReference type="ChEBI" id="CHEBI:15378"/>
        <dbReference type="ChEBI" id="CHEBI:57501"/>
        <dbReference type="ChEBI" id="CHEBI:57783"/>
        <dbReference type="ChEBI" id="CHEBI:58349"/>
        <dbReference type="ChEBI" id="CHEBI:78442"/>
        <dbReference type="ChEBI" id="CHEBI:78520"/>
        <dbReference type="EC" id="1.2.1.70"/>
    </reaction>
</comment>
<comment type="pathway">
    <text evidence="1">Porphyrin-containing compound metabolism; protoporphyrin-IX biosynthesis; 5-aminolevulinate from L-glutamyl-tRNA(Glu): step 1/2.</text>
</comment>
<comment type="subunit">
    <text evidence="1">Homodimer.</text>
</comment>
<comment type="domain">
    <text evidence="1">Possesses an unusual extended V-shaped dimeric structure with each monomer consisting of three distinct domains arranged along a curved 'spinal' alpha-helix. The N-terminal catalytic domain specifically recognizes the glutamate moiety of the substrate. The second domain is the NADPH-binding domain, and the third C-terminal domain is responsible for dimerization.</text>
</comment>
<comment type="miscellaneous">
    <text evidence="1">During catalysis, the active site Cys acts as a nucleophile attacking the alpha-carbonyl group of tRNA-bound glutamate with the formation of a thioester intermediate between enzyme and glutamate, and the concomitant release of tRNA(Glu). The thioester intermediate is finally reduced by direct hydride transfer from NADPH, to form the product GSA.</text>
</comment>
<comment type="similarity">
    <text evidence="1">Belongs to the glutamyl-tRNA reductase family.</text>
</comment>
<proteinExistence type="inferred from homology"/>
<sequence>MSLLAIGINHNTASVDLREKVAFGPDKLGPALEQLREHEAVNGSVIVSTCNRTEVYCDVKQGARNKLIDWLAQFHQVNQEDLMPSLYVHEEQAAIKHLMRVSCGLDSLVLGEPQILGQVKQAFSDSRDHQAVDTSIDKLFQKTFSVAKRVRTETDIGGNAVSVAYAACTLAKHIFESLSDSTVLLVGAGETIELVAKHLASNGCTKMIVANRTRERALGLGEQFGAEVISLNEIPDHLPRADIVISSTASPLPIIGKGMVETALKKRRHQPMLLVDIAVPRDVEAQVGELSDAYLYSVDDLQSIIDSNIEQRKVEAIQAEAIVSEESAAFMTWLRSLQAVDSIRDYRKSANEIREDLLSKSLQSLATGADPEKVLRELSNKLTNKLIHAPTRALQSAAEQGEPAKLTVIRQTLGLDDL</sequence>
<name>HEM1_VIBC1</name>
<accession>A7MY81</accession>
<dbReference type="EC" id="1.2.1.70" evidence="1"/>
<dbReference type="EMBL" id="CP000789">
    <property type="protein sequence ID" value="ABU70228.1"/>
    <property type="molecule type" value="Genomic_DNA"/>
</dbReference>
<dbReference type="RefSeq" id="WP_010650925.1">
    <property type="nucleotide sequence ID" value="NC_022269.1"/>
</dbReference>
<dbReference type="SMR" id="A7MY81"/>
<dbReference type="GeneID" id="67378159"/>
<dbReference type="KEGG" id="vha:VIBHAR_01249"/>
<dbReference type="PATRIC" id="fig|338187.25.peg.1393"/>
<dbReference type="UniPathway" id="UPA00251">
    <property type="reaction ID" value="UER00316"/>
</dbReference>
<dbReference type="Proteomes" id="UP000008152">
    <property type="component" value="Chromosome I"/>
</dbReference>
<dbReference type="GO" id="GO:0008883">
    <property type="term" value="F:glutamyl-tRNA reductase activity"/>
    <property type="evidence" value="ECO:0007669"/>
    <property type="project" value="UniProtKB-UniRule"/>
</dbReference>
<dbReference type="GO" id="GO:0050661">
    <property type="term" value="F:NADP binding"/>
    <property type="evidence" value="ECO:0007669"/>
    <property type="project" value="InterPro"/>
</dbReference>
<dbReference type="GO" id="GO:0019353">
    <property type="term" value="P:protoporphyrinogen IX biosynthetic process from glutamate"/>
    <property type="evidence" value="ECO:0007669"/>
    <property type="project" value="TreeGrafter"/>
</dbReference>
<dbReference type="CDD" id="cd05213">
    <property type="entry name" value="NAD_bind_Glutamyl_tRNA_reduct"/>
    <property type="match status" value="1"/>
</dbReference>
<dbReference type="FunFam" id="3.30.460.30:FF:000001">
    <property type="entry name" value="Glutamyl-tRNA reductase"/>
    <property type="match status" value="1"/>
</dbReference>
<dbReference type="FunFam" id="3.40.50.720:FF:000031">
    <property type="entry name" value="Glutamyl-tRNA reductase"/>
    <property type="match status" value="1"/>
</dbReference>
<dbReference type="Gene3D" id="3.30.460.30">
    <property type="entry name" value="Glutamyl-tRNA reductase, N-terminal domain"/>
    <property type="match status" value="1"/>
</dbReference>
<dbReference type="Gene3D" id="3.40.50.720">
    <property type="entry name" value="NAD(P)-binding Rossmann-like Domain"/>
    <property type="match status" value="1"/>
</dbReference>
<dbReference type="HAMAP" id="MF_00087">
    <property type="entry name" value="Glu_tRNA_reductase"/>
    <property type="match status" value="1"/>
</dbReference>
<dbReference type="InterPro" id="IPR000343">
    <property type="entry name" value="4pyrrol_synth_GluRdtase"/>
</dbReference>
<dbReference type="InterPro" id="IPR015896">
    <property type="entry name" value="4pyrrol_synth_GluRdtase_dimer"/>
</dbReference>
<dbReference type="InterPro" id="IPR015895">
    <property type="entry name" value="4pyrrol_synth_GluRdtase_N"/>
</dbReference>
<dbReference type="InterPro" id="IPR018214">
    <property type="entry name" value="GluRdtase_CS"/>
</dbReference>
<dbReference type="InterPro" id="IPR036453">
    <property type="entry name" value="GluRdtase_dimer_dom_sf"/>
</dbReference>
<dbReference type="InterPro" id="IPR036343">
    <property type="entry name" value="GluRdtase_N_sf"/>
</dbReference>
<dbReference type="InterPro" id="IPR036291">
    <property type="entry name" value="NAD(P)-bd_dom_sf"/>
</dbReference>
<dbReference type="InterPro" id="IPR006151">
    <property type="entry name" value="Shikm_DH/Glu-tRNA_Rdtase"/>
</dbReference>
<dbReference type="NCBIfam" id="TIGR01035">
    <property type="entry name" value="hemA"/>
    <property type="match status" value="1"/>
</dbReference>
<dbReference type="PANTHER" id="PTHR43013">
    <property type="entry name" value="GLUTAMYL-TRNA REDUCTASE"/>
    <property type="match status" value="1"/>
</dbReference>
<dbReference type="PANTHER" id="PTHR43013:SF1">
    <property type="entry name" value="GLUTAMYL-TRNA REDUCTASE"/>
    <property type="match status" value="1"/>
</dbReference>
<dbReference type="Pfam" id="PF00745">
    <property type="entry name" value="GlutR_dimer"/>
    <property type="match status" value="1"/>
</dbReference>
<dbReference type="Pfam" id="PF05201">
    <property type="entry name" value="GlutR_N"/>
    <property type="match status" value="1"/>
</dbReference>
<dbReference type="Pfam" id="PF01488">
    <property type="entry name" value="Shikimate_DH"/>
    <property type="match status" value="1"/>
</dbReference>
<dbReference type="PIRSF" id="PIRSF000445">
    <property type="entry name" value="4pyrrol_synth_GluRdtase"/>
    <property type="match status" value="1"/>
</dbReference>
<dbReference type="SUPFAM" id="SSF69742">
    <property type="entry name" value="Glutamyl tRNA-reductase catalytic, N-terminal domain"/>
    <property type="match status" value="1"/>
</dbReference>
<dbReference type="SUPFAM" id="SSF69075">
    <property type="entry name" value="Glutamyl tRNA-reductase dimerization domain"/>
    <property type="match status" value="1"/>
</dbReference>
<dbReference type="SUPFAM" id="SSF51735">
    <property type="entry name" value="NAD(P)-binding Rossmann-fold domains"/>
    <property type="match status" value="1"/>
</dbReference>
<dbReference type="PROSITE" id="PS00747">
    <property type="entry name" value="GLUTR"/>
    <property type="match status" value="1"/>
</dbReference>
<keyword id="KW-0521">NADP</keyword>
<keyword id="KW-0560">Oxidoreductase</keyword>
<keyword id="KW-0627">Porphyrin biosynthesis</keyword>
<evidence type="ECO:0000255" key="1">
    <source>
        <dbReference type="HAMAP-Rule" id="MF_00087"/>
    </source>
</evidence>
<protein>
    <recommendedName>
        <fullName evidence="1">Glutamyl-tRNA reductase</fullName>
        <shortName evidence="1">GluTR</shortName>
        <ecNumber evidence="1">1.2.1.70</ecNumber>
    </recommendedName>
</protein>
<gene>
    <name evidence="1" type="primary">hemA</name>
    <name type="ordered locus">VIBHAR_01249</name>
</gene>
<reference key="1">
    <citation type="submission" date="2007-08" db="EMBL/GenBank/DDBJ databases">
        <authorList>
            <consortium name="The Vibrio harveyi Genome Sequencing Project"/>
            <person name="Bassler B."/>
            <person name="Clifton S.W."/>
            <person name="Fulton L."/>
            <person name="Delehaunty K."/>
            <person name="Fronick C."/>
            <person name="Harrison M."/>
            <person name="Markivic C."/>
            <person name="Fulton R."/>
            <person name="Tin-Wollam A.-M."/>
            <person name="Shah N."/>
            <person name="Pepin K."/>
            <person name="Nash W."/>
            <person name="Thiruvilangam P."/>
            <person name="Bhonagiri V."/>
            <person name="Waters C."/>
            <person name="Tu K.C."/>
            <person name="Irgon J."/>
            <person name="Wilson R.K."/>
        </authorList>
    </citation>
    <scope>NUCLEOTIDE SEQUENCE [LARGE SCALE GENOMIC DNA]</scope>
    <source>
        <strain>ATCC BAA-1116 / BB120</strain>
    </source>
</reference>